<evidence type="ECO:0000305" key="1"/>
<organism>
    <name type="scientific">Sporobolus stapfianus</name>
    <name type="common">Ressurection grass</name>
    <dbReference type="NCBI Taxonomy" id="56623"/>
    <lineage>
        <taxon>Eukaryota</taxon>
        <taxon>Viridiplantae</taxon>
        <taxon>Streptophyta</taxon>
        <taxon>Embryophyta</taxon>
        <taxon>Tracheophyta</taxon>
        <taxon>Spermatophyta</taxon>
        <taxon>Magnoliopsida</taxon>
        <taxon>Liliopsida</taxon>
        <taxon>Poales</taxon>
        <taxon>Poaceae</taxon>
        <taxon>PACMAD clade</taxon>
        <taxon>Chloridoideae</taxon>
        <taxon>Zoysieae</taxon>
        <taxon>Sporobolinae</taxon>
        <taxon>Sporobolus</taxon>
    </lineage>
</organism>
<sequence length="115" mass="12748">MSDLDIQIPTAFDPFSEANAGDSGAAAGSKDYVHVRIQQRNGRKSLTTVQGLKKEFSYNKILKDLKKEFCCNGTVVQDPELGQVIQLQGDQRKNVSNFLVQAGIVKKEHIKIHGF</sequence>
<name>SUI1_SPOST</name>
<proteinExistence type="inferred from homology"/>
<comment type="function">
    <text>Probably involved in translation.</text>
</comment>
<comment type="similarity">
    <text evidence="1">Belongs to the SUI1 family.</text>
</comment>
<dbReference type="EMBL" id="AJ242801">
    <property type="protein sequence ID" value="CAB61837.1"/>
    <property type="molecule type" value="mRNA"/>
</dbReference>
<dbReference type="SMR" id="Q9SM41"/>
<dbReference type="GO" id="GO:0003743">
    <property type="term" value="F:translation initiation factor activity"/>
    <property type="evidence" value="ECO:0007669"/>
    <property type="project" value="InterPro"/>
</dbReference>
<dbReference type="GO" id="GO:0006417">
    <property type="term" value="P:regulation of translation"/>
    <property type="evidence" value="ECO:0007669"/>
    <property type="project" value="UniProtKB-KW"/>
</dbReference>
<dbReference type="CDD" id="cd11566">
    <property type="entry name" value="eIF1_SUI1"/>
    <property type="match status" value="1"/>
</dbReference>
<dbReference type="FunFam" id="3.30.780.10:FF:000001">
    <property type="entry name" value="Eukaryotic translation initiation factor SUI1"/>
    <property type="match status" value="1"/>
</dbReference>
<dbReference type="Gene3D" id="3.30.780.10">
    <property type="entry name" value="SUI1-like domain"/>
    <property type="match status" value="1"/>
</dbReference>
<dbReference type="InterPro" id="IPR001950">
    <property type="entry name" value="SUI1"/>
</dbReference>
<dbReference type="InterPro" id="IPR036877">
    <property type="entry name" value="SUI1_dom_sf"/>
</dbReference>
<dbReference type="InterPro" id="IPR005874">
    <property type="entry name" value="SUI1_euk"/>
</dbReference>
<dbReference type="NCBIfam" id="TIGR01160">
    <property type="entry name" value="SUI1_MOF2"/>
    <property type="match status" value="1"/>
</dbReference>
<dbReference type="PANTHER" id="PTHR10388">
    <property type="entry name" value="EUKARYOTIC TRANSLATION INITIATION FACTOR SUI1"/>
    <property type="match status" value="1"/>
</dbReference>
<dbReference type="Pfam" id="PF01253">
    <property type="entry name" value="SUI1"/>
    <property type="match status" value="1"/>
</dbReference>
<dbReference type="PIRSF" id="PIRSF004499">
    <property type="entry name" value="SUI1_euk"/>
    <property type="match status" value="1"/>
</dbReference>
<dbReference type="SUPFAM" id="SSF55159">
    <property type="entry name" value="eIF1-like"/>
    <property type="match status" value="1"/>
</dbReference>
<dbReference type="PROSITE" id="PS50296">
    <property type="entry name" value="SUI1"/>
    <property type="match status" value="1"/>
</dbReference>
<protein>
    <recommendedName>
        <fullName>Protein translation factor SUI1 homolog</fullName>
    </recommendedName>
</protein>
<reference key="1">
    <citation type="submission" date="1999-05" db="EMBL/GenBank/DDBJ databases">
        <title>The isolation of lowly-transcribed genes which are induced during desiccation of the resurrection grass Sporobolus stapfianus.</title>
        <authorList>
            <person name="Neale A.D."/>
            <person name="Blomstedt C.K."/>
            <person name="Bronson P."/>
            <person name="Le T.N."/>
            <person name="Guthridge K."/>
            <person name="Evans J."/>
            <person name="Gaff D.F."/>
            <person name="Hamill J.D."/>
        </authorList>
    </citation>
    <scope>NUCLEOTIDE SEQUENCE [MRNA]</scope>
</reference>
<accession>Q9SM41</accession>
<keyword id="KW-0648">Protein biosynthesis</keyword>
<keyword id="KW-0810">Translation regulation</keyword>
<feature type="chain" id="PRO_0000130574" description="Protein translation factor SUI1 homolog">
    <location>
        <begin position="1"/>
        <end position="115"/>
    </location>
</feature>